<accession>A7ETJ6</accession>
<gene>
    <name type="primary">atp23</name>
    <name type="ORF">SS1G_08652</name>
</gene>
<name>ATP23_SCLS1</name>
<proteinExistence type="inferred from homology"/>
<keyword id="KW-0378">Hydrolase</keyword>
<keyword id="KW-0472">Membrane</keyword>
<keyword id="KW-0479">Metal-binding</keyword>
<keyword id="KW-0482">Metalloprotease</keyword>
<keyword id="KW-0496">Mitochondrion</keyword>
<keyword id="KW-0999">Mitochondrion inner membrane</keyword>
<keyword id="KW-0645">Protease</keyword>
<keyword id="KW-1185">Reference proteome</keyword>
<sequence>MASTDDNKPPTASDFAKDAEPQFDPTARTRNWFSILLGTMPPSHQILYREDQYARHEKRDCDKCEEWRDYNLKYSPIVIFMQKNIRDLNGKLDADNIRCRRCPTRITEDGKMVRQGGGFSPEHGIQLCANEMRDSKHVEDTLAHEMVHAWDHLRWKVDWGDLRHAACSEIRAASLSGECRWTREFWTRNNYRVTQQHQECVRRRAVKSVLARPWCKDDVQAVKVVNEVWDSCYSDTRPFDEIYK</sequence>
<organism>
    <name type="scientific">Sclerotinia sclerotiorum (strain ATCC 18683 / 1980 / Ss-1)</name>
    <name type="common">White mold</name>
    <name type="synonym">Whetzelinia sclerotiorum</name>
    <dbReference type="NCBI Taxonomy" id="665079"/>
    <lineage>
        <taxon>Eukaryota</taxon>
        <taxon>Fungi</taxon>
        <taxon>Dikarya</taxon>
        <taxon>Ascomycota</taxon>
        <taxon>Pezizomycotina</taxon>
        <taxon>Leotiomycetes</taxon>
        <taxon>Helotiales</taxon>
        <taxon>Sclerotiniaceae</taxon>
        <taxon>Sclerotinia</taxon>
    </lineage>
</organism>
<dbReference type="EC" id="3.4.24.-"/>
<dbReference type="EMBL" id="CH476632">
    <property type="protein sequence ID" value="EDN92788.1"/>
    <property type="molecule type" value="Genomic_DNA"/>
</dbReference>
<dbReference type="RefSeq" id="XP_001589889.1">
    <property type="nucleotide sequence ID" value="XM_001589839.1"/>
</dbReference>
<dbReference type="FunCoup" id="A7ETJ6">
    <property type="interactions" value="470"/>
</dbReference>
<dbReference type="STRING" id="665079.A7ETJ6"/>
<dbReference type="MEROPS" id="M76.002"/>
<dbReference type="GeneID" id="5486127"/>
<dbReference type="KEGG" id="ssl:SS1G_08652"/>
<dbReference type="VEuPathDB" id="FungiDB:sscle_14g098620"/>
<dbReference type="InParanoid" id="A7ETJ6"/>
<dbReference type="OMA" id="EAHQNCV"/>
<dbReference type="OrthoDB" id="285308at2759"/>
<dbReference type="Proteomes" id="UP000001312">
    <property type="component" value="Unassembled WGS sequence"/>
</dbReference>
<dbReference type="GO" id="GO:0005743">
    <property type="term" value="C:mitochondrial inner membrane"/>
    <property type="evidence" value="ECO:0007669"/>
    <property type="project" value="UniProtKB-SubCell"/>
</dbReference>
<dbReference type="GO" id="GO:0046872">
    <property type="term" value="F:metal ion binding"/>
    <property type="evidence" value="ECO:0007669"/>
    <property type="project" value="UniProtKB-KW"/>
</dbReference>
<dbReference type="GO" id="GO:0004222">
    <property type="term" value="F:metalloendopeptidase activity"/>
    <property type="evidence" value="ECO:0007669"/>
    <property type="project" value="InterPro"/>
</dbReference>
<dbReference type="GO" id="GO:0034982">
    <property type="term" value="P:mitochondrial protein processing"/>
    <property type="evidence" value="ECO:0000318"/>
    <property type="project" value="GO_Central"/>
</dbReference>
<dbReference type="GO" id="GO:0033615">
    <property type="term" value="P:mitochondrial proton-transporting ATP synthase complex assembly"/>
    <property type="evidence" value="ECO:0000318"/>
    <property type="project" value="GO_Central"/>
</dbReference>
<dbReference type="InterPro" id="IPR019165">
    <property type="entry name" value="Peptidase_M76_ATP23"/>
</dbReference>
<dbReference type="PANTHER" id="PTHR21711">
    <property type="entry name" value="MITOCHONDRIAL INNER MEMBRANE PROTEASE"/>
    <property type="match status" value="1"/>
</dbReference>
<dbReference type="PANTHER" id="PTHR21711:SF0">
    <property type="entry name" value="MITOCHONDRIAL INNER MEMBRANE PROTEASE ATP23 HOMOLOG"/>
    <property type="match status" value="1"/>
</dbReference>
<dbReference type="Pfam" id="PF09768">
    <property type="entry name" value="Peptidase_M76"/>
    <property type="match status" value="1"/>
</dbReference>
<dbReference type="PROSITE" id="PS00142">
    <property type="entry name" value="ZINC_PROTEASE"/>
    <property type="match status" value="1"/>
</dbReference>
<reference key="1">
    <citation type="journal article" date="2011" name="PLoS Genet.">
        <title>Genomic analysis of the necrotrophic fungal pathogens Sclerotinia sclerotiorum and Botrytis cinerea.</title>
        <authorList>
            <person name="Amselem J."/>
            <person name="Cuomo C.A."/>
            <person name="van Kan J.A.L."/>
            <person name="Viaud M."/>
            <person name="Benito E.P."/>
            <person name="Couloux A."/>
            <person name="Coutinho P.M."/>
            <person name="de Vries R.P."/>
            <person name="Dyer P.S."/>
            <person name="Fillinger S."/>
            <person name="Fournier E."/>
            <person name="Gout L."/>
            <person name="Hahn M."/>
            <person name="Kohn L."/>
            <person name="Lapalu N."/>
            <person name="Plummer K.M."/>
            <person name="Pradier J.-M."/>
            <person name="Quevillon E."/>
            <person name="Sharon A."/>
            <person name="Simon A."/>
            <person name="ten Have A."/>
            <person name="Tudzynski B."/>
            <person name="Tudzynski P."/>
            <person name="Wincker P."/>
            <person name="Andrew M."/>
            <person name="Anthouard V."/>
            <person name="Beever R.E."/>
            <person name="Beffa R."/>
            <person name="Benoit I."/>
            <person name="Bouzid O."/>
            <person name="Brault B."/>
            <person name="Chen Z."/>
            <person name="Choquer M."/>
            <person name="Collemare J."/>
            <person name="Cotton P."/>
            <person name="Danchin E.G."/>
            <person name="Da Silva C."/>
            <person name="Gautier A."/>
            <person name="Giraud C."/>
            <person name="Giraud T."/>
            <person name="Gonzalez C."/>
            <person name="Grossetete S."/>
            <person name="Gueldener U."/>
            <person name="Henrissat B."/>
            <person name="Howlett B.J."/>
            <person name="Kodira C."/>
            <person name="Kretschmer M."/>
            <person name="Lappartient A."/>
            <person name="Leroch M."/>
            <person name="Levis C."/>
            <person name="Mauceli E."/>
            <person name="Neuveglise C."/>
            <person name="Oeser B."/>
            <person name="Pearson M."/>
            <person name="Poulain J."/>
            <person name="Poussereau N."/>
            <person name="Quesneville H."/>
            <person name="Rascle C."/>
            <person name="Schumacher J."/>
            <person name="Segurens B."/>
            <person name="Sexton A."/>
            <person name="Silva E."/>
            <person name="Sirven C."/>
            <person name="Soanes D.M."/>
            <person name="Talbot N.J."/>
            <person name="Templeton M."/>
            <person name="Yandava C."/>
            <person name="Yarden O."/>
            <person name="Zeng Q."/>
            <person name="Rollins J.A."/>
            <person name="Lebrun M.-H."/>
            <person name="Dickman M."/>
        </authorList>
    </citation>
    <scope>NUCLEOTIDE SEQUENCE [LARGE SCALE GENOMIC DNA]</scope>
    <source>
        <strain>ATCC 18683 / 1980 / Ss-1</strain>
    </source>
</reference>
<comment type="function">
    <text evidence="1">Has a dual role in the assembly of mitochondrial ATPase. Acts as a protease that removes N-terminal residues of mitochondrial ATPase CF(0) subunit 6 at the intermembrane space side. Also involved in the correct assembly of the membrane-embedded ATPase CF(0) particle, probably mediating association of subunit 6 with the subunit 9 ring (By similarity).</text>
</comment>
<comment type="subcellular location">
    <subcellularLocation>
        <location>Mitochondrion inner membrane</location>
        <topology>Peripheral membrane protein</topology>
        <orientation>Intermembrane side</orientation>
    </subcellularLocation>
    <text evidence="1">Associates loosely with the inner membrane.</text>
</comment>
<comment type="similarity">
    <text evidence="4">Belongs to the peptidase M76 family.</text>
</comment>
<evidence type="ECO:0000250" key="1"/>
<evidence type="ECO:0000255" key="2">
    <source>
        <dbReference type="PROSITE-ProRule" id="PRU10095"/>
    </source>
</evidence>
<evidence type="ECO:0000256" key="3">
    <source>
        <dbReference type="SAM" id="MobiDB-lite"/>
    </source>
</evidence>
<evidence type="ECO:0000305" key="4"/>
<feature type="chain" id="PRO_0000330074" description="Mitochondrial inner membrane protease atp23">
    <location>
        <begin position="1"/>
        <end position="244"/>
    </location>
</feature>
<feature type="region of interest" description="Disordered" evidence="3">
    <location>
        <begin position="1"/>
        <end position="22"/>
    </location>
</feature>
<feature type="active site" evidence="2">
    <location>
        <position position="145"/>
    </location>
</feature>
<feature type="binding site" evidence="1">
    <location>
        <position position="144"/>
    </location>
    <ligand>
        <name>a divalent metal cation</name>
        <dbReference type="ChEBI" id="CHEBI:60240"/>
        <note>catalytic</note>
    </ligand>
</feature>
<feature type="binding site" evidence="1">
    <location>
        <position position="148"/>
    </location>
    <ligand>
        <name>a divalent metal cation</name>
        <dbReference type="ChEBI" id="CHEBI:60240"/>
        <note>catalytic</note>
    </ligand>
</feature>
<protein>
    <recommendedName>
        <fullName>Mitochondrial inner membrane protease atp23</fullName>
        <ecNumber>3.4.24.-</ecNumber>
    </recommendedName>
</protein>